<organism>
    <name type="scientific">Orientia tsutsugamushi (strain Boryong)</name>
    <name type="common">Rickettsia tsutsugamushi</name>
    <dbReference type="NCBI Taxonomy" id="357244"/>
    <lineage>
        <taxon>Bacteria</taxon>
        <taxon>Pseudomonadati</taxon>
        <taxon>Pseudomonadota</taxon>
        <taxon>Alphaproteobacteria</taxon>
        <taxon>Rickettsiales</taxon>
        <taxon>Rickettsiaceae</taxon>
        <taxon>Rickettsieae</taxon>
        <taxon>Orientia</taxon>
    </lineage>
</organism>
<gene>
    <name evidence="2" type="primary">tuf2</name>
    <name type="ordered locus">OTBS_0378</name>
</gene>
<evidence type="ECO:0000250" key="1"/>
<evidence type="ECO:0000255" key="2">
    <source>
        <dbReference type="HAMAP-Rule" id="MF_00118"/>
    </source>
</evidence>
<evidence type="ECO:0000305" key="3"/>
<reference key="1">
    <citation type="journal article" date="2007" name="Proc. Natl. Acad. Sci. U.S.A.">
        <title>The Orientia tsutsugamushi genome reveals massive proliferation of conjugative type IV secretion system and host-cell interaction genes.</title>
        <authorList>
            <person name="Cho N.-H."/>
            <person name="Kim H.-R."/>
            <person name="Lee J.-H."/>
            <person name="Kim S.-Y."/>
            <person name="Kim J."/>
            <person name="Cha S."/>
            <person name="Kim S.-Y."/>
            <person name="Darby A.C."/>
            <person name="Fuxelius H.-H."/>
            <person name="Yin J."/>
            <person name="Kim J.H."/>
            <person name="Kim J."/>
            <person name="Lee S.J."/>
            <person name="Koh Y.-S."/>
            <person name="Jang W.-J."/>
            <person name="Park K.-H."/>
            <person name="Andersson S.G.E."/>
            <person name="Choi M.-S."/>
            <person name="Kim I.-S."/>
        </authorList>
    </citation>
    <scope>NUCLEOTIDE SEQUENCE [LARGE SCALE GENOMIC DNA]</scope>
    <source>
        <strain>Boryong</strain>
    </source>
</reference>
<keyword id="KW-0963">Cytoplasm</keyword>
<keyword id="KW-0251">Elongation factor</keyword>
<keyword id="KW-0342">GTP-binding</keyword>
<keyword id="KW-0378">Hydrolase</keyword>
<keyword id="KW-0460">Magnesium</keyword>
<keyword id="KW-0479">Metal-binding</keyword>
<keyword id="KW-0547">Nucleotide-binding</keyword>
<keyword id="KW-0648">Protein biosynthesis</keyword>
<keyword id="KW-1185">Reference proteome</keyword>
<sequence>MAVAFNRDKPHCNIGTIGHVDHGKTSLATAITIVSSELSGGAVKVKNYDEIDSAPEERARGITIQTAHVEFISKKRHYALVDCPGHVDYIKNMITGASQTDGLILVVSGVDGVMPQTREHVLLAKQVGVPSIIVCINKIDQADPELLELIEMEVRELLTKYDFPGDTVPIIRCSALKAINGDSDAKKGILELMDSIDDYIPQPTRVLDQPFLMPIEDVFSILGRGTVVTGRIERGVIKVGDEVEIVGLRSTQKTICTGVEMFKKELDQGQAGDNVGILLRGIKREDVERGQVLAKPGTITPHCSFEAEVYVLTKEEGGRHTPFFQNYRPQFYCRTTDVTGEIALLSGKEMVMPGDHATLSVNLVAPIAMDQGLSFAIREGGKTIGAGKVSKIIK</sequence>
<dbReference type="EC" id="3.6.5.3" evidence="2"/>
<dbReference type="EMBL" id="AM494475">
    <property type="protein sequence ID" value="CAM79444.1"/>
    <property type="status" value="ALT_INIT"/>
    <property type="molecule type" value="Genomic_DNA"/>
</dbReference>
<dbReference type="RefSeq" id="WP_011944442.1">
    <property type="nucleotide sequence ID" value="NC_009488.1"/>
</dbReference>
<dbReference type="SMR" id="A5CCL4"/>
<dbReference type="KEGG" id="ots:OTBS_0378"/>
<dbReference type="eggNOG" id="COG0050">
    <property type="taxonomic scope" value="Bacteria"/>
</dbReference>
<dbReference type="HOGENOM" id="CLU_007265_0_1_5"/>
<dbReference type="Proteomes" id="UP000001565">
    <property type="component" value="Chromosome"/>
</dbReference>
<dbReference type="GO" id="GO:0005737">
    <property type="term" value="C:cytoplasm"/>
    <property type="evidence" value="ECO:0007669"/>
    <property type="project" value="UniProtKB-SubCell"/>
</dbReference>
<dbReference type="GO" id="GO:0005525">
    <property type="term" value="F:GTP binding"/>
    <property type="evidence" value="ECO:0007669"/>
    <property type="project" value="UniProtKB-UniRule"/>
</dbReference>
<dbReference type="GO" id="GO:0003924">
    <property type="term" value="F:GTPase activity"/>
    <property type="evidence" value="ECO:0007669"/>
    <property type="project" value="InterPro"/>
</dbReference>
<dbReference type="GO" id="GO:0097216">
    <property type="term" value="F:guanosine tetraphosphate binding"/>
    <property type="evidence" value="ECO:0007669"/>
    <property type="project" value="UniProtKB-ARBA"/>
</dbReference>
<dbReference type="GO" id="GO:0003746">
    <property type="term" value="F:translation elongation factor activity"/>
    <property type="evidence" value="ECO:0007669"/>
    <property type="project" value="UniProtKB-UniRule"/>
</dbReference>
<dbReference type="CDD" id="cd01884">
    <property type="entry name" value="EF_Tu"/>
    <property type="match status" value="1"/>
</dbReference>
<dbReference type="CDD" id="cd03697">
    <property type="entry name" value="EFTU_II"/>
    <property type="match status" value="1"/>
</dbReference>
<dbReference type="CDD" id="cd03707">
    <property type="entry name" value="EFTU_III"/>
    <property type="match status" value="1"/>
</dbReference>
<dbReference type="FunFam" id="2.40.30.10:FF:000001">
    <property type="entry name" value="Elongation factor Tu"/>
    <property type="match status" value="1"/>
</dbReference>
<dbReference type="FunFam" id="3.40.50.300:FF:000003">
    <property type="entry name" value="Elongation factor Tu"/>
    <property type="match status" value="1"/>
</dbReference>
<dbReference type="Gene3D" id="3.40.50.300">
    <property type="entry name" value="P-loop containing nucleotide triphosphate hydrolases"/>
    <property type="match status" value="1"/>
</dbReference>
<dbReference type="Gene3D" id="2.40.30.10">
    <property type="entry name" value="Translation factors"/>
    <property type="match status" value="2"/>
</dbReference>
<dbReference type="HAMAP" id="MF_00118_B">
    <property type="entry name" value="EF_Tu_B"/>
    <property type="match status" value="1"/>
</dbReference>
<dbReference type="InterPro" id="IPR041709">
    <property type="entry name" value="EF-Tu_GTP-bd"/>
</dbReference>
<dbReference type="InterPro" id="IPR050055">
    <property type="entry name" value="EF-Tu_GTPase"/>
</dbReference>
<dbReference type="InterPro" id="IPR004161">
    <property type="entry name" value="EFTu-like_2"/>
</dbReference>
<dbReference type="InterPro" id="IPR033720">
    <property type="entry name" value="EFTU_2"/>
</dbReference>
<dbReference type="InterPro" id="IPR031157">
    <property type="entry name" value="G_TR_CS"/>
</dbReference>
<dbReference type="InterPro" id="IPR027417">
    <property type="entry name" value="P-loop_NTPase"/>
</dbReference>
<dbReference type="InterPro" id="IPR005225">
    <property type="entry name" value="Small_GTP-bd"/>
</dbReference>
<dbReference type="InterPro" id="IPR000795">
    <property type="entry name" value="T_Tr_GTP-bd_dom"/>
</dbReference>
<dbReference type="InterPro" id="IPR009000">
    <property type="entry name" value="Transl_B-barrel_sf"/>
</dbReference>
<dbReference type="InterPro" id="IPR009001">
    <property type="entry name" value="Transl_elong_EF1A/Init_IF2_C"/>
</dbReference>
<dbReference type="InterPro" id="IPR004541">
    <property type="entry name" value="Transl_elong_EFTu/EF1A_bac/org"/>
</dbReference>
<dbReference type="InterPro" id="IPR004160">
    <property type="entry name" value="Transl_elong_EFTu/EF1A_C"/>
</dbReference>
<dbReference type="NCBIfam" id="TIGR00485">
    <property type="entry name" value="EF-Tu"/>
    <property type="match status" value="1"/>
</dbReference>
<dbReference type="NCBIfam" id="NF000766">
    <property type="entry name" value="PRK00049.1"/>
    <property type="match status" value="1"/>
</dbReference>
<dbReference type="NCBIfam" id="NF009372">
    <property type="entry name" value="PRK12735.1"/>
    <property type="match status" value="1"/>
</dbReference>
<dbReference type="NCBIfam" id="NF009373">
    <property type="entry name" value="PRK12736.1"/>
    <property type="match status" value="1"/>
</dbReference>
<dbReference type="NCBIfam" id="TIGR00231">
    <property type="entry name" value="small_GTP"/>
    <property type="match status" value="1"/>
</dbReference>
<dbReference type="PANTHER" id="PTHR43721:SF22">
    <property type="entry name" value="ELONGATION FACTOR TU, MITOCHONDRIAL"/>
    <property type="match status" value="1"/>
</dbReference>
<dbReference type="PANTHER" id="PTHR43721">
    <property type="entry name" value="ELONGATION FACTOR TU-RELATED"/>
    <property type="match status" value="1"/>
</dbReference>
<dbReference type="Pfam" id="PF00009">
    <property type="entry name" value="GTP_EFTU"/>
    <property type="match status" value="1"/>
</dbReference>
<dbReference type="Pfam" id="PF03144">
    <property type="entry name" value="GTP_EFTU_D2"/>
    <property type="match status" value="1"/>
</dbReference>
<dbReference type="Pfam" id="PF03143">
    <property type="entry name" value="GTP_EFTU_D3"/>
    <property type="match status" value="1"/>
</dbReference>
<dbReference type="PRINTS" id="PR00315">
    <property type="entry name" value="ELONGATNFCT"/>
</dbReference>
<dbReference type="SUPFAM" id="SSF50465">
    <property type="entry name" value="EF-Tu/eEF-1alpha/eIF2-gamma C-terminal domain"/>
    <property type="match status" value="1"/>
</dbReference>
<dbReference type="SUPFAM" id="SSF52540">
    <property type="entry name" value="P-loop containing nucleoside triphosphate hydrolases"/>
    <property type="match status" value="1"/>
</dbReference>
<dbReference type="SUPFAM" id="SSF50447">
    <property type="entry name" value="Translation proteins"/>
    <property type="match status" value="1"/>
</dbReference>
<dbReference type="PROSITE" id="PS00301">
    <property type="entry name" value="G_TR_1"/>
    <property type="match status" value="1"/>
</dbReference>
<dbReference type="PROSITE" id="PS51722">
    <property type="entry name" value="G_TR_2"/>
    <property type="match status" value="1"/>
</dbReference>
<protein>
    <recommendedName>
        <fullName evidence="2">Elongation factor Tu 2</fullName>
        <shortName evidence="2">EF-Tu 2</shortName>
        <ecNumber evidence="2">3.6.5.3</ecNumber>
    </recommendedName>
</protein>
<proteinExistence type="inferred from homology"/>
<accession>A5CCL4</accession>
<name>EFTU2_ORITB</name>
<comment type="function">
    <text evidence="2">GTP hydrolase that promotes the GTP-dependent binding of aminoacyl-tRNA to the A-site of ribosomes during protein biosynthesis.</text>
</comment>
<comment type="catalytic activity">
    <reaction evidence="2">
        <text>GTP + H2O = GDP + phosphate + H(+)</text>
        <dbReference type="Rhea" id="RHEA:19669"/>
        <dbReference type="ChEBI" id="CHEBI:15377"/>
        <dbReference type="ChEBI" id="CHEBI:15378"/>
        <dbReference type="ChEBI" id="CHEBI:37565"/>
        <dbReference type="ChEBI" id="CHEBI:43474"/>
        <dbReference type="ChEBI" id="CHEBI:58189"/>
        <dbReference type="EC" id="3.6.5.3"/>
    </reaction>
    <physiologicalReaction direction="left-to-right" evidence="2">
        <dbReference type="Rhea" id="RHEA:19670"/>
    </physiologicalReaction>
</comment>
<comment type="subunit">
    <text evidence="2">Monomer.</text>
</comment>
<comment type="subcellular location">
    <subcellularLocation>
        <location evidence="2">Cytoplasm</location>
    </subcellularLocation>
</comment>
<comment type="similarity">
    <text evidence="2">Belongs to the TRAFAC class translation factor GTPase superfamily. Classic translation factor GTPase family. EF-Tu/EF-1A subfamily.</text>
</comment>
<comment type="sequence caution" evidence="3">
    <conflict type="erroneous initiation">
        <sequence resource="EMBL-CDS" id="CAM79444"/>
    </conflict>
</comment>
<feature type="chain" id="PRO_0000337452" description="Elongation factor Tu 2">
    <location>
        <begin position="1"/>
        <end position="394"/>
    </location>
</feature>
<feature type="domain" description="tr-type G">
    <location>
        <begin position="9"/>
        <end position="204"/>
    </location>
</feature>
<feature type="region of interest" description="G1" evidence="1">
    <location>
        <begin position="18"/>
        <end position="25"/>
    </location>
</feature>
<feature type="region of interest" description="G2" evidence="1">
    <location>
        <begin position="61"/>
        <end position="65"/>
    </location>
</feature>
<feature type="region of interest" description="G3" evidence="1">
    <location>
        <begin position="82"/>
        <end position="85"/>
    </location>
</feature>
<feature type="region of interest" description="G4" evidence="1">
    <location>
        <begin position="137"/>
        <end position="140"/>
    </location>
</feature>
<feature type="region of interest" description="G5" evidence="1">
    <location>
        <begin position="174"/>
        <end position="176"/>
    </location>
</feature>
<feature type="binding site" evidence="2">
    <location>
        <begin position="18"/>
        <end position="25"/>
    </location>
    <ligand>
        <name>GTP</name>
        <dbReference type="ChEBI" id="CHEBI:37565"/>
    </ligand>
</feature>
<feature type="binding site" evidence="2">
    <location>
        <position position="25"/>
    </location>
    <ligand>
        <name>Mg(2+)</name>
        <dbReference type="ChEBI" id="CHEBI:18420"/>
    </ligand>
</feature>
<feature type="binding site" evidence="2">
    <location>
        <begin position="82"/>
        <end position="86"/>
    </location>
    <ligand>
        <name>GTP</name>
        <dbReference type="ChEBI" id="CHEBI:37565"/>
    </ligand>
</feature>
<feature type="binding site" evidence="2">
    <location>
        <begin position="137"/>
        <end position="140"/>
    </location>
    <ligand>
        <name>GTP</name>
        <dbReference type="ChEBI" id="CHEBI:37565"/>
    </ligand>
</feature>